<gene>
    <name type="primary">Fcor</name>
</gene>
<reference key="1">
    <citation type="journal article" date="2012" name="EMBO J.">
        <title>Novel repressor regulates insulin sensitivity through interaction with Foxo1.</title>
        <authorList>
            <person name="Nakae J."/>
            <person name="Cao Y."/>
            <person name="Hakuno F."/>
            <person name="Takemori H."/>
            <person name="Kawano Y."/>
            <person name="Sekioka R."/>
            <person name="Abe T."/>
            <person name="Kiyonari H."/>
            <person name="Tanaka T."/>
            <person name="Sakai J."/>
            <person name="Takahashi S."/>
            <person name="Itoh H."/>
        </authorList>
    </citation>
    <scope>NUCLEOTIDE SEQUENCE [MRNA]</scope>
    <scope>FUNCTION IN ACETYLATION AND TRANSCRIPTIONAL REPRESSION OF FOXO1</scope>
    <scope>INTERACTION WITH FOXO1 AND FOXO3</scope>
    <scope>PHOSPHORYLATION AT THR-93</scope>
    <scope>PHOSPHORYLATION BY PKA</scope>
    <scope>ASSOCIATION WITH CHROMATIN</scope>
    <scope>SUBCELLULAR LOCATION</scope>
    <scope>INDUCTION</scope>
    <scope>TISSUE SPECIFICITY</scope>
    <scope>DISRUPTION PHENOTYPE</scope>
    <scope>MUTAGENESIS OF ILE-78; THR-80; LEU-81; LEU-85; LEU-87; SER-92 AND THR-93</scope>
    <source>
        <tissue>Adipocyte</tissue>
    </source>
</reference>
<reference key="2">
    <citation type="journal article" date="2009" name="PLoS Biol.">
        <title>Lineage-specific biology revealed by a finished genome assembly of the mouse.</title>
        <authorList>
            <person name="Church D.M."/>
            <person name="Goodstadt L."/>
            <person name="Hillier L.W."/>
            <person name="Zody M.C."/>
            <person name="Goldstein S."/>
            <person name="She X."/>
            <person name="Bult C.J."/>
            <person name="Agarwala R."/>
            <person name="Cherry J.L."/>
            <person name="DiCuccio M."/>
            <person name="Hlavina W."/>
            <person name="Kapustin Y."/>
            <person name="Meric P."/>
            <person name="Maglott D."/>
            <person name="Birtle Z."/>
            <person name="Marques A.C."/>
            <person name="Graves T."/>
            <person name="Zhou S."/>
            <person name="Teague B."/>
            <person name="Potamousis K."/>
            <person name="Churas C."/>
            <person name="Place M."/>
            <person name="Herschleb J."/>
            <person name="Runnheim R."/>
            <person name="Forrest D."/>
            <person name="Amos-Landgraf J."/>
            <person name="Schwartz D.C."/>
            <person name="Cheng Z."/>
            <person name="Lindblad-Toh K."/>
            <person name="Eichler E.E."/>
            <person name="Ponting C.P."/>
        </authorList>
    </citation>
    <scope>NUCLEOTIDE SEQUENCE [LARGE SCALE GENOMIC DNA]</scope>
    <source>
        <strain>C57BL/6J</strain>
    </source>
</reference>
<reference key="3">
    <citation type="submission" date="2005-07" db="EMBL/GenBank/DDBJ databases">
        <authorList>
            <person name="Mural R.J."/>
            <person name="Adams M.D."/>
            <person name="Myers E.W."/>
            <person name="Smith H.O."/>
            <person name="Venter J.C."/>
        </authorList>
    </citation>
    <scope>NUCLEOTIDE SEQUENCE [LARGE SCALE GENOMIC DNA]</scope>
</reference>
<reference key="4">
    <citation type="journal article" date="2005" name="Science">
        <title>The transcriptional landscape of the mammalian genome.</title>
        <authorList>
            <person name="Carninci P."/>
            <person name="Kasukawa T."/>
            <person name="Katayama S."/>
            <person name="Gough J."/>
            <person name="Frith M.C."/>
            <person name="Maeda N."/>
            <person name="Oyama R."/>
            <person name="Ravasi T."/>
            <person name="Lenhard B."/>
            <person name="Wells C."/>
            <person name="Kodzius R."/>
            <person name="Shimokawa K."/>
            <person name="Bajic V.B."/>
            <person name="Brenner S.E."/>
            <person name="Batalov S."/>
            <person name="Forrest A.R."/>
            <person name="Zavolan M."/>
            <person name="Davis M.J."/>
            <person name="Wilming L.G."/>
            <person name="Aidinis V."/>
            <person name="Allen J.E."/>
            <person name="Ambesi-Impiombato A."/>
            <person name="Apweiler R."/>
            <person name="Aturaliya R.N."/>
            <person name="Bailey T.L."/>
            <person name="Bansal M."/>
            <person name="Baxter L."/>
            <person name="Beisel K.W."/>
            <person name="Bersano T."/>
            <person name="Bono H."/>
            <person name="Chalk A.M."/>
            <person name="Chiu K.P."/>
            <person name="Choudhary V."/>
            <person name="Christoffels A."/>
            <person name="Clutterbuck D.R."/>
            <person name="Crowe M.L."/>
            <person name="Dalla E."/>
            <person name="Dalrymple B.P."/>
            <person name="de Bono B."/>
            <person name="Della Gatta G."/>
            <person name="di Bernardo D."/>
            <person name="Down T."/>
            <person name="Engstrom P."/>
            <person name="Fagiolini M."/>
            <person name="Faulkner G."/>
            <person name="Fletcher C.F."/>
            <person name="Fukushima T."/>
            <person name="Furuno M."/>
            <person name="Futaki S."/>
            <person name="Gariboldi M."/>
            <person name="Georgii-Hemming P."/>
            <person name="Gingeras T.R."/>
            <person name="Gojobori T."/>
            <person name="Green R.E."/>
            <person name="Gustincich S."/>
            <person name="Harbers M."/>
            <person name="Hayashi Y."/>
            <person name="Hensch T.K."/>
            <person name="Hirokawa N."/>
            <person name="Hill D."/>
            <person name="Huminiecki L."/>
            <person name="Iacono M."/>
            <person name="Ikeo K."/>
            <person name="Iwama A."/>
            <person name="Ishikawa T."/>
            <person name="Jakt M."/>
            <person name="Kanapin A."/>
            <person name="Katoh M."/>
            <person name="Kawasawa Y."/>
            <person name="Kelso J."/>
            <person name="Kitamura H."/>
            <person name="Kitano H."/>
            <person name="Kollias G."/>
            <person name="Krishnan S.P."/>
            <person name="Kruger A."/>
            <person name="Kummerfeld S.K."/>
            <person name="Kurochkin I.V."/>
            <person name="Lareau L.F."/>
            <person name="Lazarevic D."/>
            <person name="Lipovich L."/>
            <person name="Liu J."/>
            <person name="Liuni S."/>
            <person name="McWilliam S."/>
            <person name="Madan Babu M."/>
            <person name="Madera M."/>
            <person name="Marchionni L."/>
            <person name="Matsuda H."/>
            <person name="Matsuzawa S."/>
            <person name="Miki H."/>
            <person name="Mignone F."/>
            <person name="Miyake S."/>
            <person name="Morris K."/>
            <person name="Mottagui-Tabar S."/>
            <person name="Mulder N."/>
            <person name="Nakano N."/>
            <person name="Nakauchi H."/>
            <person name="Ng P."/>
            <person name="Nilsson R."/>
            <person name="Nishiguchi S."/>
            <person name="Nishikawa S."/>
            <person name="Nori F."/>
            <person name="Ohara O."/>
            <person name="Okazaki Y."/>
            <person name="Orlando V."/>
            <person name="Pang K.C."/>
            <person name="Pavan W.J."/>
            <person name="Pavesi G."/>
            <person name="Pesole G."/>
            <person name="Petrovsky N."/>
            <person name="Piazza S."/>
            <person name="Reed J."/>
            <person name="Reid J.F."/>
            <person name="Ring B.Z."/>
            <person name="Ringwald M."/>
            <person name="Rost B."/>
            <person name="Ruan Y."/>
            <person name="Salzberg S.L."/>
            <person name="Sandelin A."/>
            <person name="Schneider C."/>
            <person name="Schoenbach C."/>
            <person name="Sekiguchi K."/>
            <person name="Semple C.A."/>
            <person name="Seno S."/>
            <person name="Sessa L."/>
            <person name="Sheng Y."/>
            <person name="Shibata Y."/>
            <person name="Shimada H."/>
            <person name="Shimada K."/>
            <person name="Silva D."/>
            <person name="Sinclair B."/>
            <person name="Sperling S."/>
            <person name="Stupka E."/>
            <person name="Sugiura K."/>
            <person name="Sultana R."/>
            <person name="Takenaka Y."/>
            <person name="Taki K."/>
            <person name="Tammoja K."/>
            <person name="Tan S.L."/>
            <person name="Tang S."/>
            <person name="Taylor M.S."/>
            <person name="Tegner J."/>
            <person name="Teichmann S.A."/>
            <person name="Ueda H.R."/>
            <person name="van Nimwegen E."/>
            <person name="Verardo R."/>
            <person name="Wei C.L."/>
            <person name="Yagi K."/>
            <person name="Yamanishi H."/>
            <person name="Zabarovsky E."/>
            <person name="Zhu S."/>
            <person name="Zimmer A."/>
            <person name="Hide W."/>
            <person name="Bult C."/>
            <person name="Grimmond S.M."/>
            <person name="Teasdale R.D."/>
            <person name="Liu E.T."/>
            <person name="Brusic V."/>
            <person name="Quackenbush J."/>
            <person name="Wahlestedt C."/>
            <person name="Mattick J.S."/>
            <person name="Hume D.A."/>
            <person name="Kai C."/>
            <person name="Sasaki D."/>
            <person name="Tomaru Y."/>
            <person name="Fukuda S."/>
            <person name="Kanamori-Katayama M."/>
            <person name="Suzuki M."/>
            <person name="Aoki J."/>
            <person name="Arakawa T."/>
            <person name="Iida J."/>
            <person name="Imamura K."/>
            <person name="Itoh M."/>
            <person name="Kato T."/>
            <person name="Kawaji H."/>
            <person name="Kawagashira N."/>
            <person name="Kawashima T."/>
            <person name="Kojima M."/>
            <person name="Kondo S."/>
            <person name="Konno H."/>
            <person name="Nakano K."/>
            <person name="Ninomiya N."/>
            <person name="Nishio T."/>
            <person name="Okada M."/>
            <person name="Plessy C."/>
            <person name="Shibata K."/>
            <person name="Shiraki T."/>
            <person name="Suzuki S."/>
            <person name="Tagami M."/>
            <person name="Waki K."/>
            <person name="Watahiki A."/>
            <person name="Okamura-Oho Y."/>
            <person name="Suzuki H."/>
            <person name="Kawai J."/>
            <person name="Hayashizaki Y."/>
        </authorList>
    </citation>
    <scope>NUCLEOTIDE SEQUENCE [LARGE SCALE MRNA] OF 10-106</scope>
    <source>
        <strain>C57BL/6J</strain>
        <tissue>Embryonic stem cell</tissue>
    </source>
</reference>
<feature type="chain" id="PRO_0000418015" description="Foxo1-corepressor">
    <location>
        <begin position="1"/>
        <end position="106"/>
    </location>
</feature>
<feature type="region of interest" description="Disordered" evidence="1">
    <location>
        <begin position="1"/>
        <end position="44"/>
    </location>
</feature>
<feature type="short sequence motif" description="Nuclear export signal" evidence="3">
    <location>
        <begin position="78"/>
        <end position="87"/>
    </location>
</feature>
<feature type="modified residue" description="Phosphothreonine; by PKA" evidence="2">
    <location>
        <position position="93"/>
    </location>
</feature>
<feature type="mutagenesis site" description="Abolishes inhibition of FOXO1 transcriptional activity." evidence="2">
    <original>I</original>
    <variation>A</variation>
    <location>
        <position position="78"/>
    </location>
</feature>
<feature type="mutagenesis site" description="Abolishes inhibition of FOXO1 transcriptional activity." evidence="2">
    <original>T</original>
    <variation>A</variation>
    <location>
        <position position="80"/>
    </location>
</feature>
<feature type="mutagenesis site" description="Enhances FOXO1 nuclear translocation but does not abolish inhibition of FOXO1 transcriptional activity in the absence of forskolin." evidence="2">
    <original>L</original>
    <variation>A</variation>
    <location>
        <position position="81"/>
    </location>
</feature>
<feature type="mutagenesis site" description="Abolishes inhibition of FOXO1 transcriptional activity." evidence="2">
    <original>L</original>
    <variation>A</variation>
    <location>
        <position position="85"/>
    </location>
</feature>
<feature type="mutagenesis site" description="Abolishes inhibition of FOXO1 transcriptional activity." evidence="2">
    <original>L</original>
    <variation>A</variation>
    <location>
        <position position="87"/>
    </location>
</feature>
<feature type="mutagenesis site" description="Does not inhibit subcellular localization. Does not affect phosphorylation in response to forskolin." evidence="2">
    <original>S</original>
    <variation>A</variation>
    <location>
        <position position="92"/>
    </location>
</feature>
<feature type="mutagenesis site" description="Abolishes phosphorylation in response to forskolin. Localizes mainly to the cytosol. Weakly enhances FOXO1 acetylation. Weakly abolishes inhibition of FOXO1 transcriptional activity." evidence="2">
    <original>T</original>
    <variation>A</variation>
    <location>
        <position position="93"/>
    </location>
</feature>
<feature type="mutagenesis site" description="Mimicks phosphorylation state, localizes mainly to the nucleus. Strongly enhances FOXO1 acetylation. Strongly abolishes inhibition of FOXO1 transcriptional activity." evidence="2">
    <original>T</original>
    <variation>D</variation>
    <location>
        <position position="93"/>
    </location>
</feature>
<protein>
    <recommendedName>
        <fullName>Foxo1-corepressor</fullName>
        <shortName>FCoR</shortName>
        <ecNumber>2.3.1.-</ecNumber>
    </recommendedName>
    <alternativeName>
        <fullName>Foxo1 CoRepressor</fullName>
    </alternativeName>
</protein>
<name>FCOR_MOUSE</name>
<comment type="function">
    <text evidence="2">Regulator of adipocytes that acts by repressing FOXO1 transcriptional activity. Acts by promoting acetylation of FOXO1, both by preventing the interaction between FOXO1 and SIRT1 deacetylase, and by mediating acetyltransferase activity in vitro. Regulates insulin sensitivity and energy metabolism.</text>
</comment>
<comment type="subunit">
    <text evidence="2">Interacts with FOXO1 (via N-terminal domain); the interaction is direct, occurs in a forskolin-independent manner that prevents SIRT1 binding to FOXO1. Interacts with FOXO3. Does not interact with FOXO4.</text>
</comment>
<comment type="interaction">
    <interactant intactId="EBI-6126630">
        <id>P0DJI6</id>
    </interactant>
    <interactant intactId="EBI-1371343">
        <id>Q9R1E0</id>
        <label>Foxo1</label>
    </interactant>
    <organismsDiffer>false</organismsDiffer>
    <experiments>12</experiments>
</comment>
<comment type="interaction">
    <interactant intactId="EBI-6126630">
        <id>P0DJI6</id>
    </interactant>
    <interactant intactId="EBI-6127038">
        <id>Q9WVH4</id>
        <label>Foxo3</label>
    </interactant>
    <organismsDiffer>false</organismsDiffer>
    <experiments>2</experiments>
</comment>
<comment type="subcellular location">
    <subcellularLocation>
        <location evidence="2">Cytoplasm</location>
        <location evidence="2">Cytosol</location>
    </subcellularLocation>
    <subcellularLocation>
        <location evidence="2">Nucleus</location>
    </subcellularLocation>
    <text>Imported into the nucleus following phosphorylation at Thr-93 upon treatment of cells with forskolin. Probably shuttles between the nucleus and the cytoplasm.</text>
</comment>
<comment type="tissue specificity">
    <text evidence="2">Expressed in adipocytes. Expressed in brown and white adipose tissue but not in liver. Protein levels in brown and white adipose tissues decrease following fasting (at protein level). Expressed in white and brown adipose tissues. Expressed in adipocytes. Not expressed in liver, skeletal muscle and brain.</text>
</comment>
<comment type="induction">
    <text evidence="2">Up-regulated during adipocyte differentiation. Up-regulated by starved state in white (WAT) and brown (BAT) adipose tissues. Down-regulated during fasting in WAT and BAT. Up-regulated during cold exposure in BAT.</text>
</comment>
<comment type="PTM">
    <text evidence="2">Phosphorylated at Thr-93 by PKA, leading to import into the nucleus.</text>
</comment>
<comment type="disruption phenotype">
    <text evidence="2">Mice are glucose intolerant and insulin resistant, despite being leaner than wild-type mice.</text>
</comment>
<comment type="caution">
    <text evidence="3">It is unclear whether the protein is conserved in human: no ortholog has been identified yet although antibodies against Fcor stain human tissues.</text>
</comment>
<keyword id="KW-0963">Cytoplasm</keyword>
<keyword id="KW-0539">Nucleus</keyword>
<keyword id="KW-0597">Phosphoprotein</keyword>
<keyword id="KW-1185">Reference proteome</keyword>
<keyword id="KW-0678">Repressor</keyword>
<keyword id="KW-0804">Transcription</keyword>
<keyword id="KW-0805">Transcription regulation</keyword>
<keyword id="KW-0808">Transferase</keyword>
<dbReference type="EC" id="2.3.1.-"/>
<dbReference type="EMBL" id="AC087183">
    <property type="status" value="NOT_ANNOTATED_CDS"/>
    <property type="molecule type" value="Genomic_DNA"/>
</dbReference>
<dbReference type="EMBL" id="CH466566">
    <property type="protein sequence ID" value="EDL21945.1"/>
    <property type="molecule type" value="Genomic_DNA"/>
</dbReference>
<dbReference type="EMBL" id="BY341563">
    <property type="status" value="NOT_ANNOTATED_CDS"/>
    <property type="molecule type" value="mRNA"/>
</dbReference>
<dbReference type="EMBL" id="AK019104">
    <property type="status" value="NOT_ANNOTATED_CDS"/>
    <property type="molecule type" value="mRNA"/>
</dbReference>
<dbReference type="EMBL" id="AK019114">
    <property type="status" value="NOT_ANNOTATED_CDS"/>
    <property type="molecule type" value="mRNA"/>
</dbReference>
<dbReference type="FunCoup" id="P0DJI6">
    <property type="interactions" value="800"/>
</dbReference>
<dbReference type="IntAct" id="P0DJI6">
    <property type="interactions" value="2"/>
</dbReference>
<dbReference type="STRING" id="10090.ENSMUSP00000146366"/>
<dbReference type="iPTMnet" id="P0DJI6"/>
<dbReference type="PhosphoSitePlus" id="P0DJI6"/>
<dbReference type="jPOST" id="P0DJI6"/>
<dbReference type="Ensembl" id="ENSMUST00000159364.3">
    <property type="protein sequence ID" value="ENSMUSP00000146366.2"/>
    <property type="gene ID" value="ENSMUSG00000089665.3"/>
</dbReference>
<dbReference type="AGR" id="MGI:1915484"/>
<dbReference type="MGI" id="MGI:1915484">
    <property type="gene designation" value="Fcor"/>
</dbReference>
<dbReference type="VEuPathDB" id="HostDB:ENSMUSG00000089665"/>
<dbReference type="GeneTree" id="ENSGT00960000193309"/>
<dbReference type="InParanoid" id="P0DJI6"/>
<dbReference type="OrthoDB" id="10319612at2759"/>
<dbReference type="PRO" id="PR:P0DJI6"/>
<dbReference type="Proteomes" id="UP000000589">
    <property type="component" value="Chromosome 8"/>
</dbReference>
<dbReference type="RNAct" id="P0DJI6">
    <property type="molecule type" value="protein"/>
</dbReference>
<dbReference type="Bgee" id="ENSMUSG00000089665">
    <property type="expression patterns" value="Expressed in epididymal fat pad and 211 other cell types or tissues"/>
</dbReference>
<dbReference type="GO" id="GO:0005829">
    <property type="term" value="C:cytosol"/>
    <property type="evidence" value="ECO:0000314"/>
    <property type="project" value="UniProtKB"/>
</dbReference>
<dbReference type="GO" id="GO:0005739">
    <property type="term" value="C:mitochondrion"/>
    <property type="evidence" value="ECO:0000314"/>
    <property type="project" value="UniProtKB"/>
</dbReference>
<dbReference type="GO" id="GO:0005634">
    <property type="term" value="C:nucleus"/>
    <property type="evidence" value="ECO:0000314"/>
    <property type="project" value="UniProtKB"/>
</dbReference>
<dbReference type="GO" id="GO:0016407">
    <property type="term" value="F:acetyltransferase activity"/>
    <property type="evidence" value="ECO:0000304"/>
    <property type="project" value="UniProtKB"/>
</dbReference>
<dbReference type="GO" id="GO:0003682">
    <property type="term" value="F:chromatin binding"/>
    <property type="evidence" value="ECO:0000314"/>
    <property type="project" value="UniProtKB"/>
</dbReference>
<dbReference type="GO" id="GO:0070417">
    <property type="term" value="P:cellular response to cold"/>
    <property type="evidence" value="ECO:0000314"/>
    <property type="project" value="UniProtKB"/>
</dbReference>
<dbReference type="GO" id="GO:0009267">
    <property type="term" value="P:cellular response to starvation"/>
    <property type="evidence" value="ECO:0000314"/>
    <property type="project" value="UniProtKB"/>
</dbReference>
<dbReference type="GO" id="GO:0097009">
    <property type="term" value="P:energy homeostasis"/>
    <property type="evidence" value="ECO:0000315"/>
    <property type="project" value="UniProtKB"/>
</dbReference>
<dbReference type="GO" id="GO:0045444">
    <property type="term" value="P:fat cell differentiation"/>
    <property type="evidence" value="ECO:0000315"/>
    <property type="project" value="UniProtKB"/>
</dbReference>
<dbReference type="GO" id="GO:0001678">
    <property type="term" value="P:intracellular glucose homeostasis"/>
    <property type="evidence" value="ECO:0000315"/>
    <property type="project" value="UniProtKB"/>
</dbReference>
<dbReference type="GO" id="GO:0045892">
    <property type="term" value="P:negative regulation of DNA-templated transcription"/>
    <property type="evidence" value="ECO:0000314"/>
    <property type="project" value="UniProtKB"/>
</dbReference>
<dbReference type="GO" id="GO:0006473">
    <property type="term" value="P:protein acetylation"/>
    <property type="evidence" value="ECO:0000314"/>
    <property type="project" value="UniProtKB"/>
</dbReference>
<dbReference type="GO" id="GO:0001659">
    <property type="term" value="P:temperature homeostasis"/>
    <property type="evidence" value="ECO:0000315"/>
    <property type="project" value="UniProtKB"/>
</dbReference>
<evidence type="ECO:0000256" key="1">
    <source>
        <dbReference type="SAM" id="MobiDB-lite"/>
    </source>
</evidence>
<evidence type="ECO:0000269" key="2">
    <source>
    </source>
</evidence>
<evidence type="ECO:0000305" key="3"/>
<accession>P0DJI6</accession>
<accession>A5S7P8</accession>
<organism>
    <name type="scientific">Mus musculus</name>
    <name type="common">Mouse</name>
    <dbReference type="NCBI Taxonomy" id="10090"/>
    <lineage>
        <taxon>Eukaryota</taxon>
        <taxon>Metazoa</taxon>
        <taxon>Chordata</taxon>
        <taxon>Craniata</taxon>
        <taxon>Vertebrata</taxon>
        <taxon>Euteleostomi</taxon>
        <taxon>Mammalia</taxon>
        <taxon>Eutheria</taxon>
        <taxon>Euarchontoglires</taxon>
        <taxon>Glires</taxon>
        <taxon>Rodentia</taxon>
        <taxon>Myomorpha</taxon>
        <taxon>Muroidea</taxon>
        <taxon>Muridae</taxon>
        <taxon>Murinae</taxon>
        <taxon>Mus</taxon>
        <taxon>Mus</taxon>
    </lineage>
</organism>
<sequence length="106" mass="11233">MGGPTRRHQEEGSAECLGGPSTRAAPGPGLRDFHFTTAGPSKADRLGDAAQIHRERMRPVQCGDGSGERVFLQSPGSIGTLYIRLDLNSQRSTCCCLLNAGTKGMC</sequence>
<proteinExistence type="evidence at protein level"/>